<dbReference type="EC" id="2.7.7.38" evidence="1"/>
<dbReference type="EMBL" id="CP000555">
    <property type="protein sequence ID" value="ABM95442.1"/>
    <property type="molecule type" value="Genomic_DNA"/>
</dbReference>
<dbReference type="RefSeq" id="WP_011830075.1">
    <property type="nucleotide sequence ID" value="NC_008825.1"/>
</dbReference>
<dbReference type="SMR" id="A2SIQ3"/>
<dbReference type="STRING" id="420662.Mpe_A2487"/>
<dbReference type="KEGG" id="mpt:Mpe_A2487"/>
<dbReference type="eggNOG" id="COG1212">
    <property type="taxonomic scope" value="Bacteria"/>
</dbReference>
<dbReference type="HOGENOM" id="CLU_065038_1_0_4"/>
<dbReference type="UniPathway" id="UPA00030"/>
<dbReference type="UniPathway" id="UPA00358">
    <property type="reaction ID" value="UER00476"/>
</dbReference>
<dbReference type="Proteomes" id="UP000000366">
    <property type="component" value="Chromosome"/>
</dbReference>
<dbReference type="GO" id="GO:0005829">
    <property type="term" value="C:cytosol"/>
    <property type="evidence" value="ECO:0007669"/>
    <property type="project" value="TreeGrafter"/>
</dbReference>
<dbReference type="GO" id="GO:0008690">
    <property type="term" value="F:3-deoxy-manno-octulosonate cytidylyltransferase activity"/>
    <property type="evidence" value="ECO:0007669"/>
    <property type="project" value="UniProtKB-UniRule"/>
</dbReference>
<dbReference type="GO" id="GO:0033468">
    <property type="term" value="P:CMP-keto-3-deoxy-D-manno-octulosonic acid biosynthetic process"/>
    <property type="evidence" value="ECO:0007669"/>
    <property type="project" value="UniProtKB-UniRule"/>
</dbReference>
<dbReference type="GO" id="GO:0009103">
    <property type="term" value="P:lipopolysaccharide biosynthetic process"/>
    <property type="evidence" value="ECO:0007669"/>
    <property type="project" value="UniProtKB-UniRule"/>
</dbReference>
<dbReference type="CDD" id="cd02517">
    <property type="entry name" value="CMP-KDO-Synthetase"/>
    <property type="match status" value="1"/>
</dbReference>
<dbReference type="FunFam" id="3.90.550.10:FF:000011">
    <property type="entry name" value="3-deoxy-manno-octulosonate cytidylyltransferase"/>
    <property type="match status" value="1"/>
</dbReference>
<dbReference type="Gene3D" id="3.90.550.10">
    <property type="entry name" value="Spore Coat Polysaccharide Biosynthesis Protein SpsA, Chain A"/>
    <property type="match status" value="1"/>
</dbReference>
<dbReference type="HAMAP" id="MF_00057">
    <property type="entry name" value="KdsB"/>
    <property type="match status" value="1"/>
</dbReference>
<dbReference type="InterPro" id="IPR003329">
    <property type="entry name" value="Cytidylyl_trans"/>
</dbReference>
<dbReference type="InterPro" id="IPR004528">
    <property type="entry name" value="KdsB"/>
</dbReference>
<dbReference type="InterPro" id="IPR029044">
    <property type="entry name" value="Nucleotide-diphossugar_trans"/>
</dbReference>
<dbReference type="NCBIfam" id="TIGR00466">
    <property type="entry name" value="kdsB"/>
    <property type="match status" value="1"/>
</dbReference>
<dbReference type="NCBIfam" id="NF003952">
    <property type="entry name" value="PRK05450.1-5"/>
    <property type="match status" value="1"/>
</dbReference>
<dbReference type="NCBIfam" id="NF009905">
    <property type="entry name" value="PRK13368.1"/>
    <property type="match status" value="1"/>
</dbReference>
<dbReference type="PANTHER" id="PTHR42866">
    <property type="entry name" value="3-DEOXY-MANNO-OCTULOSONATE CYTIDYLYLTRANSFERASE"/>
    <property type="match status" value="1"/>
</dbReference>
<dbReference type="PANTHER" id="PTHR42866:SF2">
    <property type="entry name" value="3-DEOXY-MANNO-OCTULOSONATE CYTIDYLYLTRANSFERASE, MITOCHONDRIAL"/>
    <property type="match status" value="1"/>
</dbReference>
<dbReference type="Pfam" id="PF02348">
    <property type="entry name" value="CTP_transf_3"/>
    <property type="match status" value="1"/>
</dbReference>
<dbReference type="SUPFAM" id="SSF53448">
    <property type="entry name" value="Nucleotide-diphospho-sugar transferases"/>
    <property type="match status" value="1"/>
</dbReference>
<comment type="function">
    <text evidence="1">Activates KDO (a required 8-carbon sugar) for incorporation into bacterial lipopolysaccharide in Gram-negative bacteria.</text>
</comment>
<comment type="catalytic activity">
    <reaction evidence="1">
        <text>3-deoxy-alpha-D-manno-oct-2-ulosonate + CTP = CMP-3-deoxy-beta-D-manno-octulosonate + diphosphate</text>
        <dbReference type="Rhea" id="RHEA:23448"/>
        <dbReference type="ChEBI" id="CHEBI:33019"/>
        <dbReference type="ChEBI" id="CHEBI:37563"/>
        <dbReference type="ChEBI" id="CHEBI:85986"/>
        <dbReference type="ChEBI" id="CHEBI:85987"/>
        <dbReference type="EC" id="2.7.7.38"/>
    </reaction>
</comment>
<comment type="pathway">
    <text evidence="1">Nucleotide-sugar biosynthesis; CMP-3-deoxy-D-manno-octulosonate biosynthesis; CMP-3-deoxy-D-manno-octulosonate from 3-deoxy-D-manno-octulosonate and CTP: step 1/1.</text>
</comment>
<comment type="pathway">
    <text evidence="1">Bacterial outer membrane biogenesis; lipopolysaccharide biosynthesis.</text>
</comment>
<comment type="subcellular location">
    <subcellularLocation>
        <location evidence="1">Cytoplasm</location>
    </subcellularLocation>
</comment>
<comment type="similarity">
    <text evidence="1">Belongs to the KdsB family.</text>
</comment>
<feature type="chain" id="PRO_0000370095" description="3-deoxy-manno-octulosonate cytidylyltransferase">
    <location>
        <begin position="1"/>
        <end position="264"/>
    </location>
</feature>
<name>KDSB_METPP</name>
<sequence>MSFTVLIPARLGSSRLPDKPLADIAGLPMVVHVARRALASGAAVVVVAADDTRTVEACARHGVRALLTRRDHATGSDRLAEACDLLALPDSEIVVNVQGDEPLIDPALIDACARLLAERPECVMGTAAHAIDTVAEFENPNVVKVVCDALGRALSFSRAPMPWWRDGYAAGLRQATALSDPPPLRHIGLYAYRAGFLRRYPKLAPSPIETIESLEQLRVLWHGERIAVHVSPLRPGPGVDTPDDLARVRALLHDTGQEPPRESG</sequence>
<proteinExistence type="inferred from homology"/>
<evidence type="ECO:0000255" key="1">
    <source>
        <dbReference type="HAMAP-Rule" id="MF_00057"/>
    </source>
</evidence>
<organism>
    <name type="scientific">Methylibium petroleiphilum (strain ATCC BAA-1232 / LMG 22953 / PM1)</name>
    <dbReference type="NCBI Taxonomy" id="420662"/>
    <lineage>
        <taxon>Bacteria</taxon>
        <taxon>Pseudomonadati</taxon>
        <taxon>Pseudomonadota</taxon>
        <taxon>Betaproteobacteria</taxon>
        <taxon>Burkholderiales</taxon>
        <taxon>Sphaerotilaceae</taxon>
        <taxon>Methylibium</taxon>
    </lineage>
</organism>
<protein>
    <recommendedName>
        <fullName evidence="1">3-deoxy-manno-octulosonate cytidylyltransferase</fullName>
        <ecNumber evidence="1">2.7.7.38</ecNumber>
    </recommendedName>
    <alternativeName>
        <fullName evidence="1">CMP-2-keto-3-deoxyoctulosonic acid synthase</fullName>
        <shortName evidence="1">CKS</shortName>
        <shortName evidence="1">CMP-KDO synthase</shortName>
    </alternativeName>
</protein>
<gene>
    <name evidence="1" type="primary">kdsB</name>
    <name type="ordered locus">Mpe_A2487</name>
</gene>
<accession>A2SIQ3</accession>
<keyword id="KW-0963">Cytoplasm</keyword>
<keyword id="KW-0448">Lipopolysaccharide biosynthesis</keyword>
<keyword id="KW-0548">Nucleotidyltransferase</keyword>
<keyword id="KW-1185">Reference proteome</keyword>
<keyword id="KW-0808">Transferase</keyword>
<reference key="1">
    <citation type="journal article" date="2007" name="J. Bacteriol.">
        <title>Whole-genome analysis of the methyl tert-butyl ether-degrading beta-proteobacterium Methylibium petroleiphilum PM1.</title>
        <authorList>
            <person name="Kane S.R."/>
            <person name="Chakicherla A.Y."/>
            <person name="Chain P.S.G."/>
            <person name="Schmidt R."/>
            <person name="Shin M.W."/>
            <person name="Legler T.C."/>
            <person name="Scow K.M."/>
            <person name="Larimer F.W."/>
            <person name="Lucas S.M."/>
            <person name="Richardson P.M."/>
            <person name="Hristova K.R."/>
        </authorList>
    </citation>
    <scope>NUCLEOTIDE SEQUENCE [LARGE SCALE GENOMIC DNA]</scope>
    <source>
        <strain>ATCC BAA-1232 / LMG 22953 / PM1</strain>
    </source>
</reference>